<comment type="function">
    <text>Visual pigments are the light-absorbing molecules that mediate vision. They consist of an apoprotein, opsin, covalently linked to cis-retinal.</text>
</comment>
<comment type="subcellular location">
    <subcellularLocation>
        <location>Membrane</location>
        <topology>Multi-pass membrane protein</topology>
    </subcellularLocation>
</comment>
<comment type="PTM">
    <text evidence="1">Phosphorylated on some or all of the serine and threonine residues present in the C-terminal region.</text>
</comment>
<comment type="similarity">
    <text evidence="3">Belongs to the G-protein coupled receptor 1 family. Opsin subfamily.</text>
</comment>
<reference key="1">
    <citation type="journal article" date="1994" name="Gene">
        <title>The primary structure of mantid opsin.</title>
        <authorList>
            <person name="Towner P."/>
            <person name="Gaertner W."/>
        </authorList>
    </citation>
    <scope>NUCLEOTIDE SEQUENCE [MRNA]</scope>
</reference>
<sequence>MSLINEPSYSAYSWGGQGGYGNQTVVDKVLPEMLHLIDPHWYQFPPMNPLWHGLLGFVIGCLGFVSVVGNGMVIYIFSTTKGLRTPSNLLVVNLAFSDFLMMLSMSPPMVINCYYETWVLGPFMCELYALLGSLFGCGSIWTMVMIALDRYNVIVKGLAAKPMTNKTAMLRILGIWAMSIAWTVFPLFGWNRYVPEGNMTACGTDYLNKEWVSRSYILVYSVFVYFLPLATIIYSYWFIVQAVSAHEKQMREQAKKMNVASLRSAENANTSAECKLAKVALMTISLWFFAWTPYLVTDFSGIFEWGKISPLATIWCSLFAKANAVYNPIVYGISHPKYRAALNKKFPSLACASEPDDTASQASGATTVSDEKSASA</sequence>
<proteinExistence type="evidence at transcript level"/>
<name>OPSD_SPHSP</name>
<dbReference type="EMBL" id="X71665">
    <property type="protein sequence ID" value="CAA50658.1"/>
    <property type="molecule type" value="mRNA"/>
</dbReference>
<dbReference type="PIR" id="S34335">
    <property type="entry name" value="S34335"/>
</dbReference>
<dbReference type="SMR" id="P35362"/>
<dbReference type="GO" id="GO:0005886">
    <property type="term" value="C:plasma membrane"/>
    <property type="evidence" value="ECO:0000250"/>
    <property type="project" value="UniProtKB"/>
</dbReference>
<dbReference type="GO" id="GO:0004930">
    <property type="term" value="F:G protein-coupled receptor activity"/>
    <property type="evidence" value="ECO:0007669"/>
    <property type="project" value="UniProtKB-KW"/>
</dbReference>
<dbReference type="GO" id="GO:0009881">
    <property type="term" value="F:photoreceptor activity"/>
    <property type="evidence" value="ECO:0007669"/>
    <property type="project" value="UniProtKB-KW"/>
</dbReference>
<dbReference type="GO" id="GO:0007602">
    <property type="term" value="P:phototransduction"/>
    <property type="evidence" value="ECO:0007669"/>
    <property type="project" value="UniProtKB-KW"/>
</dbReference>
<dbReference type="GO" id="GO:0007601">
    <property type="term" value="P:visual perception"/>
    <property type="evidence" value="ECO:0007669"/>
    <property type="project" value="UniProtKB-KW"/>
</dbReference>
<dbReference type="CDD" id="cd15079">
    <property type="entry name" value="7tmA_photoreceptors_insect"/>
    <property type="match status" value="1"/>
</dbReference>
<dbReference type="FunFam" id="1.20.1070.10:FF:000044">
    <property type="entry name" value="Opsin, ultraviolet-sensitive"/>
    <property type="match status" value="1"/>
</dbReference>
<dbReference type="Gene3D" id="1.20.1070.10">
    <property type="entry name" value="Rhodopsin 7-helix transmembrane proteins"/>
    <property type="match status" value="1"/>
</dbReference>
<dbReference type="InterPro" id="IPR050125">
    <property type="entry name" value="GPCR_opsins"/>
</dbReference>
<dbReference type="InterPro" id="IPR000276">
    <property type="entry name" value="GPCR_Rhodpsn"/>
</dbReference>
<dbReference type="InterPro" id="IPR017452">
    <property type="entry name" value="GPCR_Rhodpsn_7TM"/>
</dbReference>
<dbReference type="InterPro" id="IPR001760">
    <property type="entry name" value="Opsin"/>
</dbReference>
<dbReference type="InterPro" id="IPR001391">
    <property type="entry name" value="Opsin_lateye"/>
</dbReference>
<dbReference type="InterPro" id="IPR027430">
    <property type="entry name" value="Retinal_BS"/>
</dbReference>
<dbReference type="PANTHER" id="PTHR24240">
    <property type="entry name" value="OPSIN"/>
    <property type="match status" value="1"/>
</dbReference>
<dbReference type="Pfam" id="PF00001">
    <property type="entry name" value="7tm_1"/>
    <property type="match status" value="1"/>
</dbReference>
<dbReference type="PRINTS" id="PR00237">
    <property type="entry name" value="GPCRRHODOPSN"/>
</dbReference>
<dbReference type="PRINTS" id="PR00238">
    <property type="entry name" value="OPSIN"/>
</dbReference>
<dbReference type="PRINTS" id="PR00578">
    <property type="entry name" value="OPSINLTRLEYE"/>
</dbReference>
<dbReference type="SUPFAM" id="SSF81321">
    <property type="entry name" value="Family A G protein-coupled receptor-like"/>
    <property type="match status" value="1"/>
</dbReference>
<dbReference type="PROSITE" id="PS00237">
    <property type="entry name" value="G_PROTEIN_RECEP_F1_1"/>
    <property type="match status" value="1"/>
</dbReference>
<dbReference type="PROSITE" id="PS50262">
    <property type="entry name" value="G_PROTEIN_RECEP_F1_2"/>
    <property type="match status" value="1"/>
</dbReference>
<dbReference type="PROSITE" id="PS00238">
    <property type="entry name" value="OPSIN"/>
    <property type="match status" value="1"/>
</dbReference>
<evidence type="ECO:0000250" key="1"/>
<evidence type="ECO:0000255" key="2"/>
<evidence type="ECO:0000255" key="3">
    <source>
        <dbReference type="PROSITE-ProRule" id="PRU00521"/>
    </source>
</evidence>
<evidence type="ECO:0000256" key="4">
    <source>
        <dbReference type="SAM" id="MobiDB-lite"/>
    </source>
</evidence>
<keyword id="KW-0157">Chromophore</keyword>
<keyword id="KW-1015">Disulfide bond</keyword>
<keyword id="KW-0297">G-protein coupled receptor</keyword>
<keyword id="KW-0325">Glycoprotein</keyword>
<keyword id="KW-0472">Membrane</keyword>
<keyword id="KW-0597">Phosphoprotein</keyword>
<keyword id="KW-0600">Photoreceptor protein</keyword>
<keyword id="KW-0675">Receptor</keyword>
<keyword id="KW-0681">Retinal protein</keyword>
<keyword id="KW-0716">Sensory transduction</keyword>
<keyword id="KW-0807">Transducer</keyword>
<keyword id="KW-0812">Transmembrane</keyword>
<keyword id="KW-1133">Transmembrane helix</keyword>
<keyword id="KW-0844">Vision</keyword>
<feature type="chain" id="PRO_0000197642" description="Rhodopsin">
    <location>
        <begin position="1"/>
        <end position="376"/>
    </location>
</feature>
<feature type="topological domain" description="Extracellular" evidence="2">
    <location>
        <begin position="1"/>
        <end position="51"/>
    </location>
</feature>
<feature type="transmembrane region" description="Helical; Name=1" evidence="2">
    <location>
        <begin position="52"/>
        <end position="76"/>
    </location>
</feature>
<feature type="topological domain" description="Cytoplasmic" evidence="2">
    <location>
        <begin position="77"/>
        <end position="88"/>
    </location>
</feature>
<feature type="transmembrane region" description="Helical; Name=2" evidence="2">
    <location>
        <begin position="89"/>
        <end position="113"/>
    </location>
</feature>
<feature type="topological domain" description="Extracellular" evidence="2">
    <location>
        <begin position="114"/>
        <end position="128"/>
    </location>
</feature>
<feature type="transmembrane region" description="Helical; Name=3" evidence="2">
    <location>
        <begin position="129"/>
        <end position="148"/>
    </location>
</feature>
<feature type="topological domain" description="Cytoplasmic" evidence="2">
    <location>
        <begin position="149"/>
        <end position="167"/>
    </location>
</feature>
<feature type="transmembrane region" description="Helical; Name=4" evidence="2">
    <location>
        <begin position="168"/>
        <end position="191"/>
    </location>
</feature>
<feature type="topological domain" description="Extracellular" evidence="2">
    <location>
        <begin position="192"/>
        <end position="215"/>
    </location>
</feature>
<feature type="transmembrane region" description="Helical; Name=5" evidence="2">
    <location>
        <begin position="216"/>
        <end position="243"/>
    </location>
</feature>
<feature type="topological domain" description="Cytoplasmic" evidence="2">
    <location>
        <begin position="244"/>
        <end position="278"/>
    </location>
</feature>
<feature type="transmembrane region" description="Helical; Name=6" evidence="2">
    <location>
        <begin position="279"/>
        <end position="302"/>
    </location>
</feature>
<feature type="topological domain" description="Extracellular" evidence="2">
    <location>
        <begin position="303"/>
        <end position="309"/>
    </location>
</feature>
<feature type="transmembrane region" description="Helical; Name=7" evidence="2">
    <location>
        <begin position="310"/>
        <end position="334"/>
    </location>
</feature>
<feature type="topological domain" description="Cytoplasmic" evidence="2">
    <location>
        <begin position="335"/>
        <end position="376"/>
    </location>
</feature>
<feature type="region of interest" description="Disordered" evidence="4">
    <location>
        <begin position="353"/>
        <end position="376"/>
    </location>
</feature>
<feature type="compositionally biased region" description="Polar residues" evidence="4">
    <location>
        <begin position="358"/>
        <end position="368"/>
    </location>
</feature>
<feature type="modified residue" description="N6-(retinylidene)lysine" evidence="1">
    <location>
        <position position="321"/>
    </location>
</feature>
<feature type="glycosylation site" description="N-linked (GlcNAc...) asparagine" evidence="2">
    <location>
        <position position="22"/>
    </location>
</feature>
<feature type="glycosylation site" description="N-linked (GlcNAc...) asparagine" evidence="2">
    <location>
        <position position="198"/>
    </location>
</feature>
<feature type="disulfide bond" evidence="3">
    <location>
        <begin position="125"/>
        <end position="202"/>
    </location>
</feature>
<accession>P35362</accession>
<protein>
    <recommendedName>
        <fullName>Rhodopsin</fullName>
        <shortName>Opsin</shortName>
    </recommendedName>
</protein>
<organism>
    <name type="scientific">Sphodromantis sp.</name>
    <name type="common">Mantis</name>
    <dbReference type="NCBI Taxonomy" id="27433"/>
    <lineage>
        <taxon>Eukaryota</taxon>
        <taxon>Metazoa</taxon>
        <taxon>Ecdysozoa</taxon>
        <taxon>Arthropoda</taxon>
        <taxon>Hexapoda</taxon>
        <taxon>Insecta</taxon>
        <taxon>Pterygota</taxon>
        <taxon>Neoptera</taxon>
        <taxon>Polyneoptera</taxon>
        <taxon>Dictyoptera</taxon>
        <taxon>Mantodea</taxon>
        <taxon>Eumantodea</taxon>
        <taxon>Mantoidea</taxon>
        <taxon>Mantidae</taxon>
        <taxon>Tenoderinae</taxon>
        <taxon>Paramantini</taxon>
        <taxon>Sphodromantis</taxon>
    </lineage>
</organism>